<name>TF3B_SCHPO</name>
<reference key="1">
    <citation type="journal article" date="2002" name="Nature">
        <title>The genome sequence of Schizosaccharomyces pombe.</title>
        <authorList>
            <person name="Wood V."/>
            <person name="Gwilliam R."/>
            <person name="Rajandream M.A."/>
            <person name="Lyne M.H."/>
            <person name="Lyne R."/>
            <person name="Stewart A."/>
            <person name="Sgouros J.G."/>
            <person name="Peat N."/>
            <person name="Hayles J."/>
            <person name="Baker S.G."/>
            <person name="Basham D."/>
            <person name="Bowman S."/>
            <person name="Brooks K."/>
            <person name="Brown D."/>
            <person name="Brown S."/>
            <person name="Chillingworth T."/>
            <person name="Churcher C.M."/>
            <person name="Collins M."/>
            <person name="Connor R."/>
            <person name="Cronin A."/>
            <person name="Davis P."/>
            <person name="Feltwell T."/>
            <person name="Fraser A."/>
            <person name="Gentles S."/>
            <person name="Goble A."/>
            <person name="Hamlin N."/>
            <person name="Harris D.E."/>
            <person name="Hidalgo J."/>
            <person name="Hodgson G."/>
            <person name="Holroyd S."/>
            <person name="Hornsby T."/>
            <person name="Howarth S."/>
            <person name="Huckle E.J."/>
            <person name="Hunt S."/>
            <person name="Jagels K."/>
            <person name="James K.D."/>
            <person name="Jones L."/>
            <person name="Jones M."/>
            <person name="Leather S."/>
            <person name="McDonald S."/>
            <person name="McLean J."/>
            <person name="Mooney P."/>
            <person name="Moule S."/>
            <person name="Mungall K.L."/>
            <person name="Murphy L.D."/>
            <person name="Niblett D."/>
            <person name="Odell C."/>
            <person name="Oliver K."/>
            <person name="O'Neil S."/>
            <person name="Pearson D."/>
            <person name="Quail M.A."/>
            <person name="Rabbinowitsch E."/>
            <person name="Rutherford K.M."/>
            <person name="Rutter S."/>
            <person name="Saunders D."/>
            <person name="Seeger K."/>
            <person name="Sharp S."/>
            <person name="Skelton J."/>
            <person name="Simmonds M.N."/>
            <person name="Squares R."/>
            <person name="Squares S."/>
            <person name="Stevens K."/>
            <person name="Taylor K."/>
            <person name="Taylor R.G."/>
            <person name="Tivey A."/>
            <person name="Walsh S.V."/>
            <person name="Warren T."/>
            <person name="Whitehead S."/>
            <person name="Woodward J.R."/>
            <person name="Volckaert G."/>
            <person name="Aert R."/>
            <person name="Robben J."/>
            <person name="Grymonprez B."/>
            <person name="Weltjens I."/>
            <person name="Vanstreels E."/>
            <person name="Rieger M."/>
            <person name="Schaefer M."/>
            <person name="Mueller-Auer S."/>
            <person name="Gabel C."/>
            <person name="Fuchs M."/>
            <person name="Duesterhoeft A."/>
            <person name="Fritzc C."/>
            <person name="Holzer E."/>
            <person name="Moestl D."/>
            <person name="Hilbert H."/>
            <person name="Borzym K."/>
            <person name="Langer I."/>
            <person name="Beck A."/>
            <person name="Lehrach H."/>
            <person name="Reinhardt R."/>
            <person name="Pohl T.M."/>
            <person name="Eger P."/>
            <person name="Zimmermann W."/>
            <person name="Wedler H."/>
            <person name="Wambutt R."/>
            <person name="Purnelle B."/>
            <person name="Goffeau A."/>
            <person name="Cadieu E."/>
            <person name="Dreano S."/>
            <person name="Gloux S."/>
            <person name="Lelaure V."/>
            <person name="Mottier S."/>
            <person name="Galibert F."/>
            <person name="Aves S.J."/>
            <person name="Xiang Z."/>
            <person name="Hunt C."/>
            <person name="Moore K."/>
            <person name="Hurst S.M."/>
            <person name="Lucas M."/>
            <person name="Rochet M."/>
            <person name="Gaillardin C."/>
            <person name="Tallada V.A."/>
            <person name="Garzon A."/>
            <person name="Thode G."/>
            <person name="Daga R.R."/>
            <person name="Cruzado L."/>
            <person name="Jimenez J."/>
            <person name="Sanchez M."/>
            <person name="del Rey F."/>
            <person name="Benito J."/>
            <person name="Dominguez A."/>
            <person name="Revuelta J.L."/>
            <person name="Moreno S."/>
            <person name="Armstrong J."/>
            <person name="Forsburg S.L."/>
            <person name="Cerutti L."/>
            <person name="Lowe T."/>
            <person name="McCombie W.R."/>
            <person name="Paulsen I."/>
            <person name="Potashkin J."/>
            <person name="Shpakovski G.V."/>
            <person name="Ussery D."/>
            <person name="Barrell B.G."/>
            <person name="Nurse P."/>
        </authorList>
    </citation>
    <scope>NUCLEOTIDE SEQUENCE [LARGE SCALE GENOMIC DNA]</scope>
    <source>
        <strain>972 / ATCC 24843</strain>
    </source>
</reference>
<reference key="2">
    <citation type="journal article" date="2011" name="Science">
        <title>Comparative functional genomics of the fission yeasts.</title>
        <authorList>
            <person name="Rhind N."/>
            <person name="Chen Z."/>
            <person name="Yassour M."/>
            <person name="Thompson D.A."/>
            <person name="Haas B.J."/>
            <person name="Habib N."/>
            <person name="Wapinski I."/>
            <person name="Roy S."/>
            <person name="Lin M.F."/>
            <person name="Heiman D.I."/>
            <person name="Young S.K."/>
            <person name="Furuya K."/>
            <person name="Guo Y."/>
            <person name="Pidoux A."/>
            <person name="Chen H.M."/>
            <person name="Robbertse B."/>
            <person name="Goldberg J.M."/>
            <person name="Aoki K."/>
            <person name="Bayne E.H."/>
            <person name="Berlin A.M."/>
            <person name="Desjardins C.A."/>
            <person name="Dobbs E."/>
            <person name="Dukaj L."/>
            <person name="Fan L."/>
            <person name="FitzGerald M.G."/>
            <person name="French C."/>
            <person name="Gujja S."/>
            <person name="Hansen K."/>
            <person name="Keifenheim D."/>
            <person name="Levin J.Z."/>
            <person name="Mosher R.A."/>
            <person name="Mueller C.A."/>
            <person name="Pfiffner J."/>
            <person name="Priest M."/>
            <person name="Russ C."/>
            <person name="Smialowska A."/>
            <person name="Swoboda P."/>
            <person name="Sykes S.M."/>
            <person name="Vaughn M."/>
            <person name="Vengrova S."/>
            <person name="Yoder R."/>
            <person name="Zeng Q."/>
            <person name="Allshire R."/>
            <person name="Baulcombe D."/>
            <person name="Birren B.W."/>
            <person name="Brown W."/>
            <person name="Ekwall K."/>
            <person name="Kellis M."/>
            <person name="Leatherwood J."/>
            <person name="Levin H."/>
            <person name="Margalit H."/>
            <person name="Martienssen R."/>
            <person name="Nieduszynski C.A."/>
            <person name="Spatafora J.W."/>
            <person name="Friedman N."/>
            <person name="Dalgaard J.Z."/>
            <person name="Baumann P."/>
            <person name="Niki H."/>
            <person name="Regev A."/>
            <person name="Nusbaum C."/>
        </authorList>
    </citation>
    <scope>REVISION OF GENE MODEL</scope>
</reference>
<reference key="3">
    <citation type="journal article" date="2005" name="J. Biol. Chem.">
        <title>Two steps in Maf1-dependent repression of transcription by RNA polymerase III.</title>
        <authorList>
            <person name="Desai N."/>
            <person name="Lee J."/>
            <person name="Upadhya R."/>
            <person name="Chu Y."/>
            <person name="Moir R.D."/>
            <person name="Willis I.M."/>
        </authorList>
    </citation>
    <scope>FUNCTION</scope>
    <scope>INTERACTION WITH MAF1</scope>
</reference>
<reference key="4">
    <citation type="journal article" date="2003" name="Nucleic Acids Res.">
        <title>The fission yeast TFIIB-related factor limits RNA polymerase III to a TATA-dependent pathway of TBP recruitment.</title>
        <authorList>
            <person name="Huang Y."/>
            <person name="McGillicuddy E."/>
            <person name="Weindel M."/>
            <person name="Dong S."/>
            <person name="Maraia R.J."/>
        </authorList>
    </citation>
    <scope>INTERACTION WITH TBP</scope>
</reference>
<reference key="5">
    <citation type="journal article" date="2006" name="Nat. Biotechnol.">
        <title>ORFeome cloning and global analysis of protein localization in the fission yeast Schizosaccharomyces pombe.</title>
        <authorList>
            <person name="Matsuyama A."/>
            <person name="Arai R."/>
            <person name="Yashiroda Y."/>
            <person name="Shirai A."/>
            <person name="Kamata A."/>
            <person name="Sekido S."/>
            <person name="Kobayashi Y."/>
            <person name="Hashimoto A."/>
            <person name="Hamamoto M."/>
            <person name="Hiraoka Y."/>
            <person name="Horinouchi S."/>
            <person name="Yoshida M."/>
        </authorList>
    </citation>
    <scope>SUBCELLULAR LOCATION [LARGE SCALE ANALYSIS]</scope>
</reference>
<accession>Q9P6R0</accession>
<accession>Q9USU4</accession>
<evidence type="ECO:0000255" key="1">
    <source>
        <dbReference type="PROSITE-ProRule" id="PRU00469"/>
    </source>
</evidence>
<evidence type="ECO:0000256" key="2">
    <source>
        <dbReference type="SAM" id="MobiDB-lite"/>
    </source>
</evidence>
<evidence type="ECO:0000269" key="3">
    <source>
    </source>
</evidence>
<evidence type="ECO:0000269" key="4">
    <source>
    </source>
</evidence>
<evidence type="ECO:0000269" key="5">
    <source>
    </source>
</evidence>
<evidence type="ECO:0000305" key="6"/>
<keyword id="KW-0010">Activator</keyword>
<keyword id="KW-0479">Metal-binding</keyword>
<keyword id="KW-0539">Nucleus</keyword>
<keyword id="KW-1185">Reference proteome</keyword>
<keyword id="KW-0804">Transcription</keyword>
<keyword id="KW-0805">Transcription regulation</keyword>
<keyword id="KW-0862">Zinc</keyword>
<keyword id="KW-0863">Zinc-finger</keyword>
<dbReference type="EMBL" id="CU329671">
    <property type="protein sequence ID" value="CAB89885.2"/>
    <property type="molecule type" value="Genomic_DNA"/>
</dbReference>
<dbReference type="PIR" id="T40176">
    <property type="entry name" value="T40176"/>
</dbReference>
<dbReference type="RefSeq" id="NP_596265.2">
    <property type="nucleotide sequence ID" value="NM_001022185.2"/>
</dbReference>
<dbReference type="SMR" id="Q9P6R0"/>
<dbReference type="BioGRID" id="276609">
    <property type="interactions" value="9"/>
</dbReference>
<dbReference type="ComplexPortal" id="CPX-8904">
    <property type="entry name" value="General transcription factor TFIIIB complex"/>
</dbReference>
<dbReference type="FunCoup" id="Q9P6R0">
    <property type="interactions" value="157"/>
</dbReference>
<dbReference type="STRING" id="284812.Q9P6R0"/>
<dbReference type="iPTMnet" id="Q9P6R0"/>
<dbReference type="PaxDb" id="4896-SPBC13E7.10c.1"/>
<dbReference type="EnsemblFungi" id="SPBC13E7.10c.1">
    <property type="protein sequence ID" value="SPBC13E7.10c.1:pep"/>
    <property type="gene ID" value="SPBC13E7.10c"/>
</dbReference>
<dbReference type="PomBase" id="SPBC13E7.10c">
    <property type="gene designation" value="brf1"/>
</dbReference>
<dbReference type="VEuPathDB" id="FungiDB:SPBC13E7.10c"/>
<dbReference type="eggNOG" id="KOG1598">
    <property type="taxonomic scope" value="Eukaryota"/>
</dbReference>
<dbReference type="HOGENOM" id="CLU_010293_2_3_1"/>
<dbReference type="InParanoid" id="Q9P6R0"/>
<dbReference type="OMA" id="EPPCKVM"/>
<dbReference type="Reactome" id="R-SPO-76061">
    <property type="pathway name" value="RNA Polymerase III Transcription Initiation From Type 1 Promoter"/>
</dbReference>
<dbReference type="Reactome" id="R-SPO-76066">
    <property type="pathway name" value="RNA Polymerase III Transcription Initiation From Type 2 Promoter"/>
</dbReference>
<dbReference type="PRO" id="PR:Q9P6R0"/>
<dbReference type="Proteomes" id="UP000002485">
    <property type="component" value="Chromosome II"/>
</dbReference>
<dbReference type="GO" id="GO:0005634">
    <property type="term" value="C:nucleus"/>
    <property type="evidence" value="ECO:0007005"/>
    <property type="project" value="PomBase"/>
</dbReference>
<dbReference type="GO" id="GO:0000126">
    <property type="term" value="C:transcription factor TFIIIB complex"/>
    <property type="evidence" value="ECO:0000314"/>
    <property type="project" value="PomBase"/>
</dbReference>
<dbReference type="GO" id="GO:0097550">
    <property type="term" value="C:transcription preinitiation complex"/>
    <property type="evidence" value="ECO:0000318"/>
    <property type="project" value="GO_Central"/>
</dbReference>
<dbReference type="GO" id="GO:0000995">
    <property type="term" value="F:RNA polymerase III general transcription initiation factor activity"/>
    <property type="evidence" value="ECO:0000315"/>
    <property type="project" value="PomBase"/>
</dbReference>
<dbReference type="GO" id="GO:0001006">
    <property type="term" value="F:RNA polymerase III type 3 promoter sequence-specific DNA binding"/>
    <property type="evidence" value="ECO:0000314"/>
    <property type="project" value="PomBase"/>
</dbReference>
<dbReference type="GO" id="GO:0017025">
    <property type="term" value="F:TBP-class protein binding"/>
    <property type="evidence" value="ECO:0007669"/>
    <property type="project" value="InterPro"/>
</dbReference>
<dbReference type="GO" id="GO:0008270">
    <property type="term" value="F:zinc ion binding"/>
    <property type="evidence" value="ECO:0007669"/>
    <property type="project" value="UniProtKB-KW"/>
</dbReference>
<dbReference type="GO" id="GO:0006352">
    <property type="term" value="P:DNA-templated transcription initiation"/>
    <property type="evidence" value="ECO:0000318"/>
    <property type="project" value="GO_Central"/>
</dbReference>
<dbReference type="GO" id="GO:0070898">
    <property type="term" value="P:RNA polymerase III preinitiation complex assembly"/>
    <property type="evidence" value="ECO:0000266"/>
    <property type="project" value="PomBase"/>
</dbReference>
<dbReference type="GO" id="GO:0006383">
    <property type="term" value="P:transcription by RNA polymerase III"/>
    <property type="evidence" value="ECO:0000318"/>
    <property type="project" value="GO_Central"/>
</dbReference>
<dbReference type="GO" id="GO:0006384">
    <property type="term" value="P:transcription initiation at RNA polymerase III promoter"/>
    <property type="evidence" value="ECO:0000315"/>
    <property type="project" value="PomBase"/>
</dbReference>
<dbReference type="CDD" id="cd20553">
    <property type="entry name" value="CYCLIN_TFIIIB90_rpt1"/>
    <property type="match status" value="1"/>
</dbReference>
<dbReference type="CDD" id="cd20554">
    <property type="entry name" value="CYCLIN_TFIIIB90_rpt2"/>
    <property type="match status" value="1"/>
</dbReference>
<dbReference type="FunFam" id="1.10.472.10:FF:000002">
    <property type="entry name" value="Transcription factor IIIB 90 kDa subunit"/>
    <property type="match status" value="1"/>
</dbReference>
<dbReference type="FunFam" id="1.10.472.10:FF:000007">
    <property type="entry name" value="Transcription factor IIIB 90 kDa subunit"/>
    <property type="match status" value="1"/>
</dbReference>
<dbReference type="Gene3D" id="2.20.25.10">
    <property type="match status" value="1"/>
</dbReference>
<dbReference type="Gene3D" id="1.10.472.10">
    <property type="entry name" value="Cyclin-like"/>
    <property type="match status" value="2"/>
</dbReference>
<dbReference type="Gene3D" id="1.20.5.650">
    <property type="entry name" value="Single helix bin"/>
    <property type="match status" value="1"/>
</dbReference>
<dbReference type="InterPro" id="IPR011665">
    <property type="entry name" value="BRF1_TBP-bd_dom"/>
</dbReference>
<dbReference type="InterPro" id="IPR013763">
    <property type="entry name" value="Cyclin-like_dom"/>
</dbReference>
<dbReference type="InterPro" id="IPR036915">
    <property type="entry name" value="Cyclin-like_sf"/>
</dbReference>
<dbReference type="InterPro" id="IPR000812">
    <property type="entry name" value="TFIIB"/>
</dbReference>
<dbReference type="InterPro" id="IPR013150">
    <property type="entry name" value="TFIIB_cyclin"/>
</dbReference>
<dbReference type="InterPro" id="IPR013137">
    <property type="entry name" value="Znf_TFIIB"/>
</dbReference>
<dbReference type="PANTHER" id="PTHR11618:SF4">
    <property type="entry name" value="TRANSCRIPTION FACTOR IIIB 90 KDA SUBUNIT"/>
    <property type="match status" value="1"/>
</dbReference>
<dbReference type="PANTHER" id="PTHR11618">
    <property type="entry name" value="TRANSCRIPTION INITIATION FACTOR IIB-RELATED"/>
    <property type="match status" value="1"/>
</dbReference>
<dbReference type="Pfam" id="PF07741">
    <property type="entry name" value="BRF1"/>
    <property type="match status" value="1"/>
</dbReference>
<dbReference type="Pfam" id="PF00382">
    <property type="entry name" value="TFIIB"/>
    <property type="match status" value="2"/>
</dbReference>
<dbReference type="Pfam" id="PF08271">
    <property type="entry name" value="Zn_Ribbon_TF"/>
    <property type="match status" value="1"/>
</dbReference>
<dbReference type="PRINTS" id="PR00685">
    <property type="entry name" value="TIFACTORIIB"/>
</dbReference>
<dbReference type="SMART" id="SM00385">
    <property type="entry name" value="CYCLIN"/>
    <property type="match status" value="2"/>
</dbReference>
<dbReference type="SUPFAM" id="SSF47954">
    <property type="entry name" value="Cyclin-like"/>
    <property type="match status" value="2"/>
</dbReference>
<dbReference type="SUPFAM" id="SSF57783">
    <property type="entry name" value="Zinc beta-ribbon"/>
    <property type="match status" value="1"/>
</dbReference>
<dbReference type="PROSITE" id="PS51134">
    <property type="entry name" value="ZF_TFIIB"/>
    <property type="match status" value="1"/>
</dbReference>
<gene>
    <name type="primary">brf1</name>
    <name type="ORF">SPBC13E7.10c</name>
    <name type="ORF">SPBC30D10.20</name>
</gene>
<feature type="chain" id="PRO_0000119345" description="Transcription factor IIIB 60 kDa subunit">
    <location>
        <begin position="1"/>
        <end position="492"/>
    </location>
</feature>
<feature type="zinc finger region" description="TFIIB-type" evidence="1">
    <location>
        <begin position="1"/>
        <end position="30"/>
    </location>
</feature>
<feature type="region of interest" description="Disordered" evidence="2">
    <location>
        <begin position="440"/>
        <end position="468"/>
    </location>
</feature>
<feature type="binding site" evidence="1">
    <location>
        <position position="3"/>
    </location>
    <ligand>
        <name>Zn(2+)</name>
        <dbReference type="ChEBI" id="CHEBI:29105"/>
    </ligand>
</feature>
<feature type="binding site" evidence="1">
    <location>
        <position position="6"/>
    </location>
    <ligand>
        <name>Zn(2+)</name>
        <dbReference type="ChEBI" id="CHEBI:29105"/>
    </ligand>
</feature>
<feature type="binding site" evidence="1">
    <location>
        <position position="22"/>
    </location>
    <ligand>
        <name>Zn(2+)</name>
        <dbReference type="ChEBI" id="CHEBI:29105"/>
    </ligand>
</feature>
<feature type="binding site" evidence="1">
    <location>
        <position position="25"/>
    </location>
    <ligand>
        <name>Zn(2+)</name>
        <dbReference type="ChEBI" id="CHEBI:29105"/>
    </ligand>
</feature>
<protein>
    <recommendedName>
        <fullName>Transcription factor IIIB 60 kDa subunit</fullName>
        <shortName>TFIIIB</shortName>
    </recommendedName>
    <alternativeName>
        <fullName>B-related factor 1</fullName>
        <shortName>BRF-1</shortName>
    </alternativeName>
    <alternativeName>
        <fullName>TFIIB-related factor</fullName>
    </alternativeName>
</protein>
<organism>
    <name type="scientific">Schizosaccharomyces pombe (strain 972 / ATCC 24843)</name>
    <name type="common">Fission yeast</name>
    <dbReference type="NCBI Taxonomy" id="284812"/>
    <lineage>
        <taxon>Eukaryota</taxon>
        <taxon>Fungi</taxon>
        <taxon>Dikarya</taxon>
        <taxon>Ascomycota</taxon>
        <taxon>Taphrinomycotina</taxon>
        <taxon>Schizosaccharomycetes</taxon>
        <taxon>Schizosaccharomycetales</taxon>
        <taxon>Schizosaccharomycetaceae</taxon>
        <taxon>Schizosaccharomyces</taxon>
    </lineage>
</organism>
<comment type="function">
    <text evidence="4">General activator of RNA polymerase III transcription.</text>
</comment>
<comment type="subunit">
    <text evidence="3 4 6">TFIIIB comprises the TATA-binding protein (TBP), the B-related factor (BRF) and a third subunit (Potential). Interacts with maf1.</text>
</comment>
<comment type="subcellular location">
    <subcellularLocation>
        <location evidence="5">Nucleus</location>
    </subcellularLocation>
</comment>
<comment type="similarity">
    <text evidence="6">Belongs to the TFIIB family.</text>
</comment>
<proteinExistence type="evidence at protein level"/>
<sequence length="492" mass="55795">MGCPNCGSTTFESDTASGNTYCTQCGVVVEQDAIVSEVTFGEASTGAAVVQGSLVSNDQTHARTFGGPYRNQGSVESRELTIANGRRRISALAIALKLNERHIEAAVRYFTLAINNNFIKGRRSQYVVASCLYIVCRISKTSHMLIDFSDILQINVFKLGSTFLKLCRVLRPNLPLLDPSLYISRFASLLEFGPETHRVANDAIRLVARMNRDWMQIGRRPAGICGACLLIAARMNNFRRSVREVVHVVKVADITIQKRLDEFKLTESGDLSIADFRNIWLEGQSDPPSFTKNQKFQQYGAQKVSNIDHTQEYMSPIKRTPDFDGNEVKSEELSQTVKVESQETPVHLKADEREIRKEVTETLKGDELRKISLQVNVKFSEEEVTLEDVDDDEIEDILLDKDEILTKTQVWMELNKDYLAEEEAKNLKLQEDLKKGIVRQPRKRRRYRPRDSTSDGIADTAAESAKEMMQQRAFSKKINYEALDMLFDEEQS</sequence>